<reference key="1">
    <citation type="journal article" date="2000" name="Nucleic Acids Res.">
        <title>Genome sequences of Chlamydia trachomatis MoPn and Chlamydia pneumoniae AR39.</title>
        <authorList>
            <person name="Read T.D."/>
            <person name="Brunham R.C."/>
            <person name="Shen C."/>
            <person name="Gill S.R."/>
            <person name="Heidelberg J.F."/>
            <person name="White O."/>
            <person name="Hickey E.K."/>
            <person name="Peterson J.D."/>
            <person name="Utterback T.R."/>
            <person name="Berry K.J."/>
            <person name="Bass S."/>
            <person name="Linher K.D."/>
            <person name="Weidman J.F."/>
            <person name="Khouri H.M."/>
            <person name="Craven B."/>
            <person name="Bowman C."/>
            <person name="Dodson R.J."/>
            <person name="Gwinn M.L."/>
            <person name="Nelson W.C."/>
            <person name="DeBoy R.T."/>
            <person name="Kolonay J.F."/>
            <person name="McClarty G."/>
            <person name="Salzberg S.L."/>
            <person name="Eisen J.A."/>
            <person name="Fraser C.M."/>
        </authorList>
    </citation>
    <scope>NUCLEOTIDE SEQUENCE [LARGE SCALE GENOMIC DNA]</scope>
    <source>
        <strain>MoPn / Nigg</strain>
    </source>
</reference>
<sequence length="203" mass="22101">MTLVPYVVEDTGRGERAMDIYSRLLKDRIVMIGQEITEPLANTVIAQLLFLMSEDPTKDIQIFINSPGGYITAGLAIYDTIRFLGCDVNTYCIGQAASMGALLLSAGTKGKRYALPHSRMMIHQPSGGIIGTSADIQLQAAEILTLKKHLSNILAECTGQPVEKIIEDSERDFFMGAEEAIAYGLIDKVVSSAKETKDKNIVS</sequence>
<organism>
    <name type="scientific">Chlamydia muridarum (strain MoPn / Nigg)</name>
    <dbReference type="NCBI Taxonomy" id="243161"/>
    <lineage>
        <taxon>Bacteria</taxon>
        <taxon>Pseudomonadati</taxon>
        <taxon>Chlamydiota</taxon>
        <taxon>Chlamydiia</taxon>
        <taxon>Chlamydiales</taxon>
        <taxon>Chlamydiaceae</taxon>
        <taxon>Chlamydia/Chlamydophila group</taxon>
        <taxon>Chlamydia</taxon>
    </lineage>
</organism>
<keyword id="KW-0963">Cytoplasm</keyword>
<keyword id="KW-0378">Hydrolase</keyword>
<keyword id="KW-0645">Protease</keyword>
<keyword id="KW-0720">Serine protease</keyword>
<comment type="function">
    <text evidence="1">Cleaves peptides in various proteins in a process that requires ATP hydrolysis. Has a chymotrypsin-like activity. Plays a major role in the degradation of misfolded proteins.</text>
</comment>
<comment type="catalytic activity">
    <reaction evidence="1">
        <text>Hydrolysis of proteins to small peptides in the presence of ATP and magnesium. alpha-casein is the usual test substrate. In the absence of ATP, only oligopeptides shorter than five residues are hydrolyzed (such as succinyl-Leu-Tyr-|-NHMec, and Leu-Tyr-Leu-|-Tyr-Trp, in which cleavage of the -Tyr-|-Leu- and -Tyr-|-Trp bonds also occurs).</text>
        <dbReference type="EC" id="3.4.21.92"/>
    </reaction>
</comment>
<comment type="subunit">
    <text evidence="1">Fourteen ClpP subunits assemble into 2 heptameric rings which stack back to back to give a disk-like structure with a central cavity, resembling the structure of eukaryotic proteasomes.</text>
</comment>
<comment type="subcellular location">
    <subcellularLocation>
        <location evidence="1">Cytoplasm</location>
    </subcellularLocation>
</comment>
<comment type="similarity">
    <text evidence="1">Belongs to the peptidase S14 family.</text>
</comment>
<feature type="chain" id="PRO_0000179531" description="ATP-dependent Clp protease proteolytic subunit 2">
    <location>
        <begin position="1"/>
        <end position="203"/>
    </location>
</feature>
<feature type="active site" description="Nucleophile" evidence="1">
    <location>
        <position position="98"/>
    </location>
</feature>
<feature type="active site" evidence="1">
    <location>
        <position position="123"/>
    </location>
</feature>
<accession>Q9PLM0</accession>
<protein>
    <recommendedName>
        <fullName evidence="1">ATP-dependent Clp protease proteolytic subunit 2</fullName>
        <ecNumber evidence="1">3.4.21.92</ecNumber>
    </recommendedName>
    <alternativeName>
        <fullName evidence="1">Endopeptidase Clp 2</fullName>
    </alternativeName>
</protein>
<proteinExistence type="inferred from homology"/>
<evidence type="ECO:0000255" key="1">
    <source>
        <dbReference type="HAMAP-Rule" id="MF_00444"/>
    </source>
</evidence>
<name>CLPP2_CHLMU</name>
<gene>
    <name evidence="1" type="primary">clpP2</name>
    <name type="ordered locus">TC_0079</name>
</gene>
<dbReference type="EC" id="3.4.21.92" evidence="1"/>
<dbReference type="EMBL" id="AE002160">
    <property type="protein sequence ID" value="AAF38961.1"/>
    <property type="molecule type" value="Genomic_DNA"/>
</dbReference>
<dbReference type="PIR" id="D81744">
    <property type="entry name" value="D81744"/>
</dbReference>
<dbReference type="RefSeq" id="WP_010229313.1">
    <property type="nucleotide sequence ID" value="NZ_CP063055.1"/>
</dbReference>
<dbReference type="SMR" id="Q9PLM0"/>
<dbReference type="MEROPS" id="S14.001"/>
<dbReference type="GeneID" id="1245608"/>
<dbReference type="KEGG" id="cmu:TC_0079"/>
<dbReference type="eggNOG" id="COG0740">
    <property type="taxonomic scope" value="Bacteria"/>
</dbReference>
<dbReference type="HOGENOM" id="CLU_058707_3_2_0"/>
<dbReference type="OrthoDB" id="9802800at2"/>
<dbReference type="Proteomes" id="UP000000800">
    <property type="component" value="Chromosome"/>
</dbReference>
<dbReference type="GO" id="GO:0005737">
    <property type="term" value="C:cytoplasm"/>
    <property type="evidence" value="ECO:0007669"/>
    <property type="project" value="UniProtKB-SubCell"/>
</dbReference>
<dbReference type="GO" id="GO:0009368">
    <property type="term" value="C:endopeptidase Clp complex"/>
    <property type="evidence" value="ECO:0007669"/>
    <property type="project" value="TreeGrafter"/>
</dbReference>
<dbReference type="GO" id="GO:0004176">
    <property type="term" value="F:ATP-dependent peptidase activity"/>
    <property type="evidence" value="ECO:0007669"/>
    <property type="project" value="InterPro"/>
</dbReference>
<dbReference type="GO" id="GO:0051117">
    <property type="term" value="F:ATPase binding"/>
    <property type="evidence" value="ECO:0007669"/>
    <property type="project" value="TreeGrafter"/>
</dbReference>
<dbReference type="GO" id="GO:0004252">
    <property type="term" value="F:serine-type endopeptidase activity"/>
    <property type="evidence" value="ECO:0007669"/>
    <property type="project" value="UniProtKB-UniRule"/>
</dbReference>
<dbReference type="GO" id="GO:0006515">
    <property type="term" value="P:protein quality control for misfolded or incompletely synthesized proteins"/>
    <property type="evidence" value="ECO:0007669"/>
    <property type="project" value="TreeGrafter"/>
</dbReference>
<dbReference type="CDD" id="cd07017">
    <property type="entry name" value="S14_ClpP_2"/>
    <property type="match status" value="1"/>
</dbReference>
<dbReference type="FunFam" id="3.90.226.10:FF:000001">
    <property type="entry name" value="ATP-dependent Clp protease proteolytic subunit"/>
    <property type="match status" value="1"/>
</dbReference>
<dbReference type="Gene3D" id="3.90.226.10">
    <property type="entry name" value="2-enoyl-CoA Hydratase, Chain A, domain 1"/>
    <property type="match status" value="1"/>
</dbReference>
<dbReference type="HAMAP" id="MF_00444">
    <property type="entry name" value="ClpP"/>
    <property type="match status" value="1"/>
</dbReference>
<dbReference type="InterPro" id="IPR001907">
    <property type="entry name" value="ClpP"/>
</dbReference>
<dbReference type="InterPro" id="IPR029045">
    <property type="entry name" value="ClpP/crotonase-like_dom_sf"/>
</dbReference>
<dbReference type="InterPro" id="IPR023562">
    <property type="entry name" value="ClpP/TepA"/>
</dbReference>
<dbReference type="InterPro" id="IPR033135">
    <property type="entry name" value="ClpP_His_AS"/>
</dbReference>
<dbReference type="InterPro" id="IPR018215">
    <property type="entry name" value="ClpP_Ser_AS"/>
</dbReference>
<dbReference type="NCBIfam" id="NF001368">
    <property type="entry name" value="PRK00277.1"/>
    <property type="match status" value="1"/>
</dbReference>
<dbReference type="NCBIfam" id="NF009205">
    <property type="entry name" value="PRK12553.1"/>
    <property type="match status" value="1"/>
</dbReference>
<dbReference type="PANTHER" id="PTHR10381">
    <property type="entry name" value="ATP-DEPENDENT CLP PROTEASE PROTEOLYTIC SUBUNIT"/>
    <property type="match status" value="1"/>
</dbReference>
<dbReference type="PANTHER" id="PTHR10381:SF70">
    <property type="entry name" value="ATP-DEPENDENT CLP PROTEASE PROTEOLYTIC SUBUNIT"/>
    <property type="match status" value="1"/>
</dbReference>
<dbReference type="Pfam" id="PF00574">
    <property type="entry name" value="CLP_protease"/>
    <property type="match status" value="1"/>
</dbReference>
<dbReference type="PRINTS" id="PR00127">
    <property type="entry name" value="CLPPROTEASEP"/>
</dbReference>
<dbReference type="SUPFAM" id="SSF52096">
    <property type="entry name" value="ClpP/crotonase"/>
    <property type="match status" value="1"/>
</dbReference>
<dbReference type="PROSITE" id="PS00382">
    <property type="entry name" value="CLP_PROTEASE_HIS"/>
    <property type="match status" value="1"/>
</dbReference>
<dbReference type="PROSITE" id="PS00381">
    <property type="entry name" value="CLP_PROTEASE_SER"/>
    <property type="match status" value="1"/>
</dbReference>